<keyword id="KW-1185">Reference proteome</keyword>
<protein>
    <recommendedName>
        <fullName evidence="1">UPF0597 protein SO_1403</fullName>
    </recommendedName>
</protein>
<feature type="chain" id="PRO_0000339848" description="UPF0597 protein SO_1403">
    <location>
        <begin position="1"/>
        <end position="424"/>
    </location>
</feature>
<sequence>MKPQWQQYIQIINQVVKPALGCTEPIAAAYAAAVARTLLNDDPDSIAVQVSDNLYKNSMGVYVPGTGKIGLAIAAAAGALAGNADAGLEVLASVTPEQVAQAQALIDAAKVKVERTETDEFIYCCVTLTSGEQEAMVKICGGHTLIAEKRLNGELVFTADNAQAKATGSICDGVDINIESIYRFAEEVPFEEIQFILKASELNSKLSDEGMSKPYGLEVGRTMKNGIAAGIIGEDLLNKIVMLTAAASDARMGGANLPAMSNLGSGNQGIAATIPVVITAQCYKVSEEKLARALIMSHLGAIYIKSHYPPLSAFCGNTVTSAAASMAMVYLAGGSFEQSCFAIQNVISDSSGMVCDGAKASCAMKVSTSSSAAVRSFLMALSSQNVSGQGIIANHVEKTIKNIGKMVLNGMSSTDVTIINIMSE</sequence>
<accession>Q8EH28</accession>
<dbReference type="EMBL" id="AE014299">
    <property type="protein sequence ID" value="AAN54468.1"/>
    <property type="molecule type" value="Genomic_DNA"/>
</dbReference>
<dbReference type="RefSeq" id="NP_717023.1">
    <property type="nucleotide sequence ID" value="NC_004347.2"/>
</dbReference>
<dbReference type="RefSeq" id="WP_011071607.1">
    <property type="nucleotide sequence ID" value="NC_004347.2"/>
</dbReference>
<dbReference type="SMR" id="Q8EH28"/>
<dbReference type="STRING" id="211586.SO_1403"/>
<dbReference type="PaxDb" id="211586-SO_1403"/>
<dbReference type="KEGG" id="son:SO_1403"/>
<dbReference type="PATRIC" id="fig|1028802.3.peg.252"/>
<dbReference type="eggNOG" id="COG3681">
    <property type="taxonomic scope" value="Bacteria"/>
</dbReference>
<dbReference type="HOGENOM" id="CLU_051840_0_0_6"/>
<dbReference type="OrthoDB" id="41906at2"/>
<dbReference type="PhylomeDB" id="Q8EH28"/>
<dbReference type="BioCyc" id="SONE211586:G1GMP-1298-MONOMER"/>
<dbReference type="Proteomes" id="UP000008186">
    <property type="component" value="Chromosome"/>
</dbReference>
<dbReference type="GO" id="GO:0080146">
    <property type="term" value="F:L-cysteine desulfhydrase activity"/>
    <property type="evidence" value="ECO:0000318"/>
    <property type="project" value="GO_Central"/>
</dbReference>
<dbReference type="GO" id="GO:0019450">
    <property type="term" value="P:L-cysteine catabolic process to pyruvate"/>
    <property type="evidence" value="ECO:0000318"/>
    <property type="project" value="GO_Central"/>
</dbReference>
<dbReference type="HAMAP" id="MF_01845">
    <property type="entry name" value="UPF0597"/>
    <property type="match status" value="1"/>
</dbReference>
<dbReference type="InterPro" id="IPR005130">
    <property type="entry name" value="Ser_deHydtase-like_asu"/>
</dbReference>
<dbReference type="InterPro" id="IPR021144">
    <property type="entry name" value="UPF0597"/>
</dbReference>
<dbReference type="PANTHER" id="PTHR30501">
    <property type="entry name" value="UPF0597 PROTEIN YHAM"/>
    <property type="match status" value="1"/>
</dbReference>
<dbReference type="PANTHER" id="PTHR30501:SF2">
    <property type="entry name" value="UPF0597 PROTEIN YHAM"/>
    <property type="match status" value="1"/>
</dbReference>
<dbReference type="Pfam" id="PF03313">
    <property type="entry name" value="SDH_alpha"/>
    <property type="match status" value="1"/>
</dbReference>
<dbReference type="PIRSF" id="PIRSF006054">
    <property type="entry name" value="UCP006054"/>
    <property type="match status" value="1"/>
</dbReference>
<reference key="1">
    <citation type="journal article" date="2002" name="Nat. Biotechnol.">
        <title>Genome sequence of the dissimilatory metal ion-reducing bacterium Shewanella oneidensis.</title>
        <authorList>
            <person name="Heidelberg J.F."/>
            <person name="Paulsen I.T."/>
            <person name="Nelson K.E."/>
            <person name="Gaidos E.J."/>
            <person name="Nelson W.C."/>
            <person name="Read T.D."/>
            <person name="Eisen J.A."/>
            <person name="Seshadri R."/>
            <person name="Ward N.L."/>
            <person name="Methe B.A."/>
            <person name="Clayton R.A."/>
            <person name="Meyer T."/>
            <person name="Tsapin A."/>
            <person name="Scott J."/>
            <person name="Beanan M.J."/>
            <person name="Brinkac L.M."/>
            <person name="Daugherty S.C."/>
            <person name="DeBoy R.T."/>
            <person name="Dodson R.J."/>
            <person name="Durkin A.S."/>
            <person name="Haft D.H."/>
            <person name="Kolonay J.F."/>
            <person name="Madupu R."/>
            <person name="Peterson J.D."/>
            <person name="Umayam L.A."/>
            <person name="White O."/>
            <person name="Wolf A.M."/>
            <person name="Vamathevan J.J."/>
            <person name="Weidman J.F."/>
            <person name="Impraim M."/>
            <person name="Lee K."/>
            <person name="Berry K.J."/>
            <person name="Lee C."/>
            <person name="Mueller J."/>
            <person name="Khouri H.M."/>
            <person name="Gill J."/>
            <person name="Utterback T.R."/>
            <person name="McDonald L.A."/>
            <person name="Feldblyum T.V."/>
            <person name="Smith H.O."/>
            <person name="Venter J.C."/>
            <person name="Nealson K.H."/>
            <person name="Fraser C.M."/>
        </authorList>
    </citation>
    <scope>NUCLEOTIDE SEQUENCE [LARGE SCALE GENOMIC DNA]</scope>
    <source>
        <strain>ATCC 700550 / JCM 31522 / CIP 106686 / LMG 19005 / NCIMB 14063 / MR-1</strain>
    </source>
</reference>
<comment type="similarity">
    <text evidence="1">Belongs to the UPF0597 family.</text>
</comment>
<evidence type="ECO:0000255" key="1">
    <source>
        <dbReference type="HAMAP-Rule" id="MF_01845"/>
    </source>
</evidence>
<organism>
    <name type="scientific">Shewanella oneidensis (strain ATCC 700550 / JCM 31522 / CIP 106686 / LMG 19005 / NCIMB 14063 / MR-1)</name>
    <dbReference type="NCBI Taxonomy" id="211586"/>
    <lineage>
        <taxon>Bacteria</taxon>
        <taxon>Pseudomonadati</taxon>
        <taxon>Pseudomonadota</taxon>
        <taxon>Gammaproteobacteria</taxon>
        <taxon>Alteromonadales</taxon>
        <taxon>Shewanellaceae</taxon>
        <taxon>Shewanella</taxon>
    </lineage>
</organism>
<proteinExistence type="inferred from homology"/>
<name>Y1403_SHEON</name>
<gene>
    <name type="ordered locus">SO_1403</name>
</gene>